<name>TOP1_MYCTU</name>
<evidence type="ECO:0000250" key="1">
    <source>
        <dbReference type="UniProtKB" id="A5U8X0"/>
    </source>
</evidence>
<evidence type="ECO:0000255" key="2">
    <source>
        <dbReference type="HAMAP-Rule" id="MF_00952"/>
    </source>
</evidence>
<evidence type="ECO:0000255" key="3">
    <source>
        <dbReference type="PROSITE-ProRule" id="PRU01383"/>
    </source>
</evidence>
<evidence type="ECO:0000256" key="4">
    <source>
        <dbReference type="SAM" id="MobiDB-lite"/>
    </source>
</evidence>
<evidence type="ECO:0000269" key="5">
    <source>
    </source>
</evidence>
<evidence type="ECO:0000269" key="6">
    <source>
    </source>
</evidence>
<evidence type="ECO:0000305" key="7"/>
<evidence type="ECO:0007829" key="8">
    <source>
        <dbReference type="PDB" id="5UJ1"/>
    </source>
</evidence>
<evidence type="ECO:0007829" key="9">
    <source>
        <dbReference type="PDB" id="6CQ2"/>
    </source>
</evidence>
<evidence type="ECO:0007829" key="10">
    <source>
        <dbReference type="PDB" id="6CQI"/>
    </source>
</evidence>
<evidence type="ECO:0007829" key="11">
    <source>
        <dbReference type="PDB" id="8CZQ"/>
    </source>
</evidence>
<evidence type="ECO:0007829" key="12">
    <source>
        <dbReference type="PDB" id="8TFG"/>
    </source>
</evidence>
<proteinExistence type="evidence at protein level"/>
<protein>
    <recommendedName>
        <fullName evidence="2">DNA topoisomerase 1</fullName>
        <ecNumber evidence="2 6">5.6.2.1</ecNumber>
    </recommendedName>
    <alternativeName>
        <fullName evidence="2">DNA topoisomerase I</fullName>
    </alternativeName>
    <alternativeName>
        <fullName>Omega-protein</fullName>
    </alternativeName>
    <alternativeName>
        <fullName>Relaxing enzyme</fullName>
    </alternativeName>
    <alternativeName>
        <fullName>Swivelase</fullName>
    </alternativeName>
    <alternativeName>
        <fullName>Untwisting enzyme</fullName>
    </alternativeName>
</protein>
<reference key="1">
    <citation type="journal article" date="1998" name="Nature">
        <title>Deciphering the biology of Mycobacterium tuberculosis from the complete genome sequence.</title>
        <authorList>
            <person name="Cole S.T."/>
            <person name="Brosch R."/>
            <person name="Parkhill J."/>
            <person name="Garnier T."/>
            <person name="Churcher C.M."/>
            <person name="Harris D.E."/>
            <person name="Gordon S.V."/>
            <person name="Eiglmeier K."/>
            <person name="Gas S."/>
            <person name="Barry C.E. III"/>
            <person name="Tekaia F."/>
            <person name="Badcock K."/>
            <person name="Basham D."/>
            <person name="Brown D."/>
            <person name="Chillingworth T."/>
            <person name="Connor R."/>
            <person name="Davies R.M."/>
            <person name="Devlin K."/>
            <person name="Feltwell T."/>
            <person name="Gentles S."/>
            <person name="Hamlin N."/>
            <person name="Holroyd S."/>
            <person name="Hornsby T."/>
            <person name="Jagels K."/>
            <person name="Krogh A."/>
            <person name="McLean J."/>
            <person name="Moule S."/>
            <person name="Murphy L.D."/>
            <person name="Oliver S."/>
            <person name="Osborne J."/>
            <person name="Quail M.A."/>
            <person name="Rajandream M.A."/>
            <person name="Rogers J."/>
            <person name="Rutter S."/>
            <person name="Seeger K."/>
            <person name="Skelton S."/>
            <person name="Squares S."/>
            <person name="Squares R."/>
            <person name="Sulston J.E."/>
            <person name="Taylor K."/>
            <person name="Whitehead S."/>
            <person name="Barrell B.G."/>
        </authorList>
    </citation>
    <scope>NUCLEOTIDE SEQUENCE [LARGE SCALE GENOMIC DNA]</scope>
    <source>
        <strain>ATCC 25618 / H37Rv</strain>
    </source>
</reference>
<reference key="2">
    <citation type="journal article" date="1996" name="Gene">
        <title>Cloning, expression, purification and characterization of DNA topoisomerase I of Mycobacterium tuberculosis.</title>
        <authorList>
            <person name="Yang F.D."/>
            <person name="Lu G."/>
            <person name="Rubin H."/>
        </authorList>
    </citation>
    <scope>NUCLEOTIDE SEQUENCE [GENOMIC DNA] OF 1-895</scope>
    <scope>FUNCTION</scope>
    <scope>CATALYTIC ACTIVITY</scope>
    <source>
        <strain>ATCC 35801 / TMC 107 / Erdman</strain>
    </source>
</reference>
<reference key="3">
    <citation type="journal article" date="2008" name="BMC Syst. Biol.">
        <title>targetTB: a target identification pipeline for Mycobacterium tuberculosis through an interactome, reactome and genome-scale structural analysis.</title>
        <authorList>
            <person name="Raman K."/>
            <person name="Yeturu K."/>
            <person name="Chandra N."/>
        </authorList>
    </citation>
    <scope>IDENTIFICATION AS A DRUG TARGET [LARGE SCALE ANALYSIS]</scope>
</reference>
<reference key="4">
    <citation type="journal article" date="2010" name="Nucleic Acids Res.">
        <title>Characterization of an interplay between a Mycobacterium tuberculosis MazF homolog, Rv1495 and its sole DNA topoisomerase I.</title>
        <authorList>
            <person name="Huang F."/>
            <person name="He Z.G."/>
        </authorList>
    </citation>
    <scope>FUNCTION AS A TOPOISOMERASE</scope>
    <scope>DNA CLEAVAGE</scope>
    <scope>SSDNA-BINDING</scope>
    <scope>INTERACTION WITH MAZF4</scope>
    <scope>INHIBITION BY MAZF4</scope>
    <scope>INHIBITION OF MAZF ACTIVITY</scope>
    <scope>ACTIVITY REGULATION</scope>
    <source>
        <strain>ATCC 25618 / H37Rv</strain>
    </source>
</reference>
<reference key="5">
    <citation type="journal article" date="2011" name="Mol. Cell. Proteomics">
        <title>Proteogenomic analysis of Mycobacterium tuberculosis by high resolution mass spectrometry.</title>
        <authorList>
            <person name="Kelkar D.S."/>
            <person name="Kumar D."/>
            <person name="Kumar P."/>
            <person name="Balakrishnan L."/>
            <person name="Muthusamy B."/>
            <person name="Yadav A.K."/>
            <person name="Shrivastava P."/>
            <person name="Marimuthu A."/>
            <person name="Anand S."/>
            <person name="Sundaram H."/>
            <person name="Kingsbury R."/>
            <person name="Harsha H.C."/>
            <person name="Nair B."/>
            <person name="Prasad T.S."/>
            <person name="Chauhan D.S."/>
            <person name="Katoch K."/>
            <person name="Katoch V.M."/>
            <person name="Kumar P."/>
            <person name="Chaerkady R."/>
            <person name="Ramachandran S."/>
            <person name="Dash D."/>
            <person name="Pandey A."/>
        </authorList>
    </citation>
    <scope>IDENTIFICATION BY MASS SPECTROMETRY [LARGE SCALE ANALYSIS]</scope>
    <source>
        <strain>ATCC 25618 / H37Rv</strain>
    </source>
</reference>
<dbReference type="EC" id="5.6.2.1" evidence="2 6"/>
<dbReference type="EMBL" id="AL123456">
    <property type="protein sequence ID" value="CCP46469.1"/>
    <property type="molecule type" value="Genomic_DNA"/>
</dbReference>
<dbReference type="EMBL" id="U40159">
    <property type="protein sequence ID" value="AAC44599.1"/>
    <property type="molecule type" value="Genomic_DNA"/>
</dbReference>
<dbReference type="PIR" id="G70563">
    <property type="entry name" value="G70563"/>
</dbReference>
<dbReference type="RefSeq" id="NP_218163.1">
    <property type="nucleotide sequence ID" value="NC_000962.3"/>
</dbReference>
<dbReference type="RefSeq" id="WP_003899617.1">
    <property type="nucleotide sequence ID" value="NZ_NVQJ01000045.1"/>
</dbReference>
<dbReference type="PDB" id="5D5H">
    <property type="method" value="X-ray"/>
    <property type="resolution" value="2.52 A"/>
    <property type="chains" value="A=2-704"/>
</dbReference>
<dbReference type="PDB" id="5UJ1">
    <property type="method" value="X-ray"/>
    <property type="resolution" value="2.15 A"/>
    <property type="chains" value="A=2-704"/>
</dbReference>
<dbReference type="PDB" id="5UJY">
    <property type="method" value="X-ray"/>
    <property type="resolution" value="2.70 A"/>
    <property type="chains" value="A/B=2-704"/>
</dbReference>
<dbReference type="PDB" id="6CQ2">
    <property type="method" value="X-ray"/>
    <property type="resolution" value="3.00 A"/>
    <property type="chains" value="A=2-704"/>
</dbReference>
<dbReference type="PDB" id="6CQI">
    <property type="method" value="X-ray"/>
    <property type="resolution" value="2.42 A"/>
    <property type="chains" value="A=2-704"/>
</dbReference>
<dbReference type="PDB" id="8CZQ">
    <property type="method" value="X-ray"/>
    <property type="resolution" value="2.78 A"/>
    <property type="chains" value="A=2-704"/>
</dbReference>
<dbReference type="PDB" id="8TFG">
    <property type="method" value="X-ray"/>
    <property type="resolution" value="1.88 A"/>
    <property type="chains" value="A=17-704"/>
</dbReference>
<dbReference type="PDBsum" id="5D5H"/>
<dbReference type="PDBsum" id="5UJ1"/>
<dbReference type="PDBsum" id="5UJY"/>
<dbReference type="PDBsum" id="6CQ2"/>
<dbReference type="PDBsum" id="6CQI"/>
<dbReference type="PDBsum" id="8CZQ"/>
<dbReference type="PDBsum" id="8TFG"/>
<dbReference type="SMR" id="P9WG49"/>
<dbReference type="FunCoup" id="P9WG49">
    <property type="interactions" value="326"/>
</dbReference>
<dbReference type="STRING" id="83332.Rv3646c"/>
<dbReference type="BindingDB" id="P9WG49"/>
<dbReference type="PaxDb" id="83332-Rv3646c"/>
<dbReference type="DNASU" id="885608"/>
<dbReference type="GeneID" id="45427643"/>
<dbReference type="GeneID" id="885608"/>
<dbReference type="KEGG" id="mtu:Rv3646c"/>
<dbReference type="KEGG" id="mtv:RVBD_3646c"/>
<dbReference type="TubercuList" id="Rv3646c"/>
<dbReference type="eggNOG" id="COG0550">
    <property type="taxonomic scope" value="Bacteria"/>
</dbReference>
<dbReference type="eggNOG" id="COG1754">
    <property type="taxonomic scope" value="Bacteria"/>
</dbReference>
<dbReference type="InParanoid" id="P9WG49"/>
<dbReference type="OrthoDB" id="9804262at2"/>
<dbReference type="PhylomeDB" id="P9WG49"/>
<dbReference type="BRENDA" id="5.6.2.1">
    <property type="organism ID" value="3445"/>
</dbReference>
<dbReference type="EvolutionaryTrace" id="P9WG49"/>
<dbReference type="Proteomes" id="UP000001584">
    <property type="component" value="Chromosome"/>
</dbReference>
<dbReference type="GO" id="GO:0005829">
    <property type="term" value="C:cytosol"/>
    <property type="evidence" value="ECO:0007005"/>
    <property type="project" value="MTBBASE"/>
</dbReference>
<dbReference type="GO" id="GO:0009274">
    <property type="term" value="C:peptidoglycan-based cell wall"/>
    <property type="evidence" value="ECO:0007005"/>
    <property type="project" value="MTBBASE"/>
</dbReference>
<dbReference type="GO" id="GO:0005886">
    <property type="term" value="C:plasma membrane"/>
    <property type="evidence" value="ECO:0007005"/>
    <property type="project" value="MTBBASE"/>
</dbReference>
<dbReference type="GO" id="GO:0003677">
    <property type="term" value="F:DNA binding"/>
    <property type="evidence" value="ECO:0007669"/>
    <property type="project" value="UniProtKB-KW"/>
</dbReference>
<dbReference type="GO" id="GO:0003917">
    <property type="term" value="F:DNA topoisomerase type I (single strand cut, ATP-independent) activity"/>
    <property type="evidence" value="ECO:0000314"/>
    <property type="project" value="MTBBASE"/>
</dbReference>
<dbReference type="GO" id="GO:0000287">
    <property type="term" value="F:magnesium ion binding"/>
    <property type="evidence" value="ECO:0000314"/>
    <property type="project" value="MTBBASE"/>
</dbReference>
<dbReference type="GO" id="GO:0008428">
    <property type="term" value="F:ribonuclease inhibitor activity"/>
    <property type="evidence" value="ECO:0000314"/>
    <property type="project" value="UniProtKB"/>
</dbReference>
<dbReference type="GO" id="GO:0006265">
    <property type="term" value="P:DNA topological change"/>
    <property type="evidence" value="ECO:0007669"/>
    <property type="project" value="UniProtKB-UniRule"/>
</dbReference>
<dbReference type="CDD" id="cd00186">
    <property type="entry name" value="TOP1Ac"/>
    <property type="match status" value="1"/>
</dbReference>
<dbReference type="CDD" id="cd03363">
    <property type="entry name" value="TOPRIM_TopoIA_TopoI"/>
    <property type="match status" value="1"/>
</dbReference>
<dbReference type="FunFam" id="1.10.290.10:FF:000002">
    <property type="entry name" value="DNA topoisomerase 1"/>
    <property type="match status" value="1"/>
</dbReference>
<dbReference type="FunFam" id="3.40.50.140:FF:000001">
    <property type="entry name" value="DNA topoisomerase 1"/>
    <property type="match status" value="1"/>
</dbReference>
<dbReference type="Gene3D" id="3.40.50.140">
    <property type="match status" value="1"/>
</dbReference>
<dbReference type="Gene3D" id="1.10.460.10">
    <property type="entry name" value="Topoisomerase I, domain 2"/>
    <property type="match status" value="1"/>
</dbReference>
<dbReference type="Gene3D" id="2.70.20.10">
    <property type="entry name" value="Topoisomerase I, domain 3"/>
    <property type="match status" value="1"/>
</dbReference>
<dbReference type="Gene3D" id="1.10.290.10">
    <property type="entry name" value="Topoisomerase I, domain 4"/>
    <property type="match status" value="1"/>
</dbReference>
<dbReference type="HAMAP" id="MF_00952">
    <property type="entry name" value="Topoisom_1_prok"/>
    <property type="match status" value="1"/>
</dbReference>
<dbReference type="InterPro" id="IPR000380">
    <property type="entry name" value="Topo_IA"/>
</dbReference>
<dbReference type="InterPro" id="IPR003601">
    <property type="entry name" value="Topo_IA_2"/>
</dbReference>
<dbReference type="InterPro" id="IPR023406">
    <property type="entry name" value="Topo_IA_AS"/>
</dbReference>
<dbReference type="InterPro" id="IPR013497">
    <property type="entry name" value="Topo_IA_cen"/>
</dbReference>
<dbReference type="InterPro" id="IPR013824">
    <property type="entry name" value="Topo_IA_cen_sub1"/>
</dbReference>
<dbReference type="InterPro" id="IPR013825">
    <property type="entry name" value="Topo_IA_cen_sub2"/>
</dbReference>
<dbReference type="InterPro" id="IPR013826">
    <property type="entry name" value="Topo_IA_cen_sub3"/>
</dbReference>
<dbReference type="InterPro" id="IPR023405">
    <property type="entry name" value="Topo_IA_core_domain"/>
</dbReference>
<dbReference type="InterPro" id="IPR003602">
    <property type="entry name" value="Topo_IA_DNA-bd_dom"/>
</dbReference>
<dbReference type="InterPro" id="IPR005733">
    <property type="entry name" value="TopoI_bac-type"/>
</dbReference>
<dbReference type="InterPro" id="IPR028612">
    <property type="entry name" value="Topoisom_1_IA"/>
</dbReference>
<dbReference type="InterPro" id="IPR025589">
    <property type="entry name" value="Toprim_C_rpt"/>
</dbReference>
<dbReference type="InterPro" id="IPR006171">
    <property type="entry name" value="TOPRIM_dom"/>
</dbReference>
<dbReference type="InterPro" id="IPR034149">
    <property type="entry name" value="TOPRIM_TopoI"/>
</dbReference>
<dbReference type="NCBIfam" id="TIGR01051">
    <property type="entry name" value="topA_bact"/>
    <property type="match status" value="1"/>
</dbReference>
<dbReference type="PANTHER" id="PTHR42785:SF1">
    <property type="entry name" value="DNA TOPOISOMERASE"/>
    <property type="match status" value="1"/>
</dbReference>
<dbReference type="PANTHER" id="PTHR42785">
    <property type="entry name" value="DNA TOPOISOMERASE, TYPE IA, CORE"/>
    <property type="match status" value="1"/>
</dbReference>
<dbReference type="Pfam" id="PF01131">
    <property type="entry name" value="Topoisom_bac"/>
    <property type="match status" value="1"/>
</dbReference>
<dbReference type="Pfam" id="PF01751">
    <property type="entry name" value="Toprim"/>
    <property type="match status" value="1"/>
</dbReference>
<dbReference type="Pfam" id="PF13368">
    <property type="entry name" value="Toprim_C_rpt"/>
    <property type="match status" value="4"/>
</dbReference>
<dbReference type="PRINTS" id="PR00417">
    <property type="entry name" value="PRTPISMRASEI"/>
</dbReference>
<dbReference type="SMART" id="SM00437">
    <property type="entry name" value="TOP1Ac"/>
    <property type="match status" value="1"/>
</dbReference>
<dbReference type="SMART" id="SM00436">
    <property type="entry name" value="TOP1Bc"/>
    <property type="match status" value="1"/>
</dbReference>
<dbReference type="SMART" id="SM00493">
    <property type="entry name" value="TOPRIM"/>
    <property type="match status" value="1"/>
</dbReference>
<dbReference type="SUPFAM" id="SSF56712">
    <property type="entry name" value="Prokaryotic type I DNA topoisomerase"/>
    <property type="match status" value="1"/>
</dbReference>
<dbReference type="PROSITE" id="PS00396">
    <property type="entry name" value="TOPO_IA_1"/>
    <property type="match status" value="1"/>
</dbReference>
<dbReference type="PROSITE" id="PS52039">
    <property type="entry name" value="TOPO_IA_2"/>
    <property type="match status" value="1"/>
</dbReference>
<dbReference type="PROSITE" id="PS50880">
    <property type="entry name" value="TOPRIM"/>
    <property type="match status" value="1"/>
</dbReference>
<feature type="chain" id="PRO_0000145159" description="DNA topoisomerase 1">
    <location>
        <begin position="1"/>
        <end position="934"/>
    </location>
</feature>
<feature type="domain" description="Toprim" evidence="2">
    <location>
        <begin position="18"/>
        <end position="142"/>
    </location>
</feature>
<feature type="domain" description="Topo IA-type catalytic" evidence="3">
    <location>
        <begin position="157"/>
        <end position="616"/>
    </location>
</feature>
<feature type="region of interest" description="Disordered" evidence="4">
    <location>
        <begin position="1"/>
        <end position="20"/>
    </location>
</feature>
<feature type="region of interest" description="Interaction with DNA" evidence="2">
    <location>
        <begin position="191"/>
        <end position="196"/>
    </location>
</feature>
<feature type="region of interest" description="Disordered" evidence="4">
    <location>
        <begin position="746"/>
        <end position="765"/>
    </location>
</feature>
<feature type="region of interest" description="Disordered" evidence="4">
    <location>
        <begin position="842"/>
        <end position="892"/>
    </location>
</feature>
<feature type="region of interest" description="Disordered" evidence="4">
    <location>
        <begin position="905"/>
        <end position="934"/>
    </location>
</feature>
<feature type="compositionally biased region" description="Basic residues" evidence="4">
    <location>
        <begin position="911"/>
        <end position="934"/>
    </location>
</feature>
<feature type="active site" description="O-(5'-phospho-DNA)-tyrosine intermediate" evidence="3">
    <location>
        <position position="342"/>
    </location>
</feature>
<feature type="binding site" evidence="2">
    <location>
        <position position="24"/>
    </location>
    <ligand>
        <name>Mg(2+)</name>
        <dbReference type="ChEBI" id="CHEBI:18420"/>
        <note>catalytic</note>
    </ligand>
</feature>
<feature type="binding site" evidence="2">
    <location>
        <position position="111"/>
    </location>
    <ligand>
        <name>Mg(2+)</name>
        <dbReference type="ChEBI" id="CHEBI:18420"/>
        <note>catalytic</note>
    </ligand>
</feature>
<feature type="site" description="Interaction with DNA" evidence="2">
    <location>
        <position position="48"/>
    </location>
</feature>
<feature type="site" description="Interaction with DNA" evidence="2">
    <location>
        <position position="167"/>
    </location>
</feature>
<feature type="site" description="Interaction with DNA" evidence="2">
    <location>
        <position position="168"/>
    </location>
</feature>
<feature type="site" description="Interaction with DNA" evidence="2">
    <location>
        <position position="171"/>
    </location>
</feature>
<feature type="site" description="Interaction with DNA" evidence="2">
    <location>
        <position position="176"/>
    </location>
</feature>
<feature type="site" description="Interaction with DNA" evidence="2">
    <location>
        <position position="183"/>
    </location>
</feature>
<feature type="site" description="Interaction with DNA" evidence="2">
    <location>
        <position position="344"/>
    </location>
</feature>
<feature type="site" description="Interaction with DNA" evidence="2">
    <location>
        <position position="547"/>
    </location>
</feature>
<feature type="sequence conflict" description="In Ref. 2; AAC44599." evidence="7" ref="2">
    <original>M</original>
    <variation>MERGAQL</variation>
    <location>
        <position position="1"/>
    </location>
</feature>
<feature type="sequence conflict" description="In Ref. 2; AAC44599." evidence="7" ref="2">
    <original>PRAASDVPA</original>
    <variation>RGPRRCTR</variation>
    <location>
        <begin position="53"/>
        <end position="61"/>
    </location>
</feature>
<feature type="sequence conflict" description="In Ref. 2; AAC44599." evidence="7" ref="2">
    <original>RDFDSLGTLRKGDEVIVLDEGSATALA</original>
    <variation>AISTRWARCAKATKSLCSTRGARPRWP</variation>
    <location>
        <begin position="255"/>
        <end position="281"/>
    </location>
</feature>
<feature type="sequence conflict" description="In Ref. 2; AAC44599." evidence="7" ref="2">
    <original>EYVA</original>
    <variation>GVRR</variation>
    <location>
        <begin position="369"/>
        <end position="372"/>
    </location>
</feature>
<feature type="sequence conflict" description="In Ref. 2; AAC44599." evidence="7" ref="2">
    <original>G</original>
    <variation>V</variation>
    <location>
        <position position="797"/>
    </location>
</feature>
<feature type="sequence conflict" description="In Ref. 2; AAC44599." evidence="7" ref="2">
    <original>PLRELGTDPASGKPMVIKDGRFGPYVTDGETNASLRKGDDVAS</original>
    <variation>ACASWEQIRRRASQWSSRTADSGRTSPTVRPMPACVRATTWLP</variation>
    <location>
        <begin position="853"/>
        <end position="895"/>
    </location>
</feature>
<feature type="strand" evidence="12">
    <location>
        <begin position="19"/>
        <end position="24"/>
    </location>
</feature>
<feature type="helix" evidence="12">
    <location>
        <begin position="26"/>
        <end position="36"/>
    </location>
</feature>
<feature type="strand" evidence="12">
    <location>
        <begin position="40"/>
        <end position="44"/>
    </location>
</feature>
<feature type="strand" evidence="12">
    <location>
        <begin position="49"/>
        <end position="52"/>
    </location>
</feature>
<feature type="helix" evidence="12">
    <location>
        <begin position="56"/>
        <end position="58"/>
    </location>
</feature>
<feature type="helix" evidence="12">
    <location>
        <begin position="61"/>
        <end position="63"/>
    </location>
</feature>
<feature type="turn" evidence="12">
    <location>
        <begin position="67"/>
        <end position="72"/>
    </location>
</feature>
<feature type="turn" evidence="12">
    <location>
        <begin position="75"/>
        <end position="79"/>
    </location>
</feature>
<feature type="helix" evidence="12">
    <location>
        <begin position="87"/>
        <end position="89"/>
    </location>
</feature>
<feature type="helix" evidence="12">
    <location>
        <begin position="90"/>
        <end position="100"/>
    </location>
</feature>
<feature type="strand" evidence="12">
    <location>
        <begin position="104"/>
        <end position="108"/>
    </location>
</feature>
<feature type="helix" evidence="12">
    <location>
        <begin position="114"/>
        <end position="127"/>
    </location>
</feature>
<feature type="strand" evidence="12">
    <location>
        <begin position="133"/>
        <end position="135"/>
    </location>
</feature>
<feature type="strand" evidence="10">
    <location>
        <begin position="140"/>
        <end position="142"/>
    </location>
</feature>
<feature type="helix" evidence="12">
    <location>
        <begin position="143"/>
        <end position="151"/>
    </location>
</feature>
<feature type="helix" evidence="12">
    <location>
        <begin position="158"/>
        <end position="185"/>
    </location>
</feature>
<feature type="helix" evidence="12">
    <location>
        <begin position="194"/>
        <end position="212"/>
    </location>
</feature>
<feature type="strand" evidence="12">
    <location>
        <begin position="217"/>
        <end position="226"/>
    </location>
</feature>
<feature type="turn" evidence="12">
    <location>
        <begin position="228"/>
        <end position="230"/>
    </location>
</feature>
<feature type="strand" evidence="12">
    <location>
        <begin position="235"/>
        <end position="246"/>
    </location>
</feature>
<feature type="strand" evidence="12">
    <location>
        <begin position="249"/>
        <end position="251"/>
    </location>
</feature>
<feature type="helix" evidence="12">
    <location>
        <begin position="254"/>
        <end position="256"/>
    </location>
</feature>
<feature type="strand" evidence="8">
    <location>
        <begin position="261"/>
        <end position="263"/>
    </location>
</feature>
<feature type="strand" evidence="12">
    <location>
        <begin position="265"/>
        <end position="267"/>
    </location>
</feature>
<feature type="helix" evidence="12">
    <location>
        <begin position="274"/>
        <end position="284"/>
    </location>
</feature>
<feature type="strand" evidence="12">
    <location>
        <begin position="289"/>
        <end position="301"/>
    </location>
</feature>
<feature type="helix" evidence="12">
    <location>
        <begin position="309"/>
        <end position="320"/>
    </location>
</feature>
<feature type="helix" evidence="12">
    <location>
        <begin position="324"/>
        <end position="336"/>
    </location>
</feature>
<feature type="strand" evidence="12">
    <location>
        <begin position="339"/>
        <end position="341"/>
    </location>
</feature>
<feature type="helix" evidence="12">
    <location>
        <begin position="352"/>
        <end position="366"/>
    </location>
</feature>
<feature type="helix" evidence="12">
    <location>
        <begin position="368"/>
        <end position="370"/>
    </location>
</feature>
<feature type="turn" evidence="12">
    <location>
        <begin position="385"/>
        <end position="387"/>
    </location>
</feature>
<feature type="strand" evidence="12">
    <location>
        <begin position="396"/>
        <end position="398"/>
    </location>
</feature>
<feature type="helix" evidence="12">
    <location>
        <begin position="402"/>
        <end position="406"/>
    </location>
</feature>
<feature type="turn" evidence="12">
    <location>
        <begin position="407"/>
        <end position="409"/>
    </location>
</feature>
<feature type="helix" evidence="12">
    <location>
        <begin position="411"/>
        <end position="413"/>
    </location>
</feature>
<feature type="helix" evidence="12">
    <location>
        <begin position="414"/>
        <end position="429"/>
    </location>
</feature>
<feature type="strand" evidence="12">
    <location>
        <begin position="435"/>
        <end position="448"/>
    </location>
</feature>
<feature type="strand" evidence="12">
    <location>
        <begin position="451"/>
        <end position="460"/>
    </location>
</feature>
<feature type="helix" evidence="12">
    <location>
        <begin position="466"/>
        <end position="469"/>
    </location>
</feature>
<feature type="turn" evidence="12">
    <location>
        <begin position="477"/>
        <end position="479"/>
    </location>
</feature>
<feature type="strand" evidence="12">
    <location>
        <begin position="498"/>
        <end position="510"/>
    </location>
</feature>
<feature type="helix" evidence="12">
    <location>
        <begin position="519"/>
        <end position="528"/>
    </location>
</feature>
<feature type="turn" evidence="12">
    <location>
        <begin position="534"/>
        <end position="536"/>
    </location>
</feature>
<feature type="helix" evidence="12">
    <location>
        <begin position="537"/>
        <end position="546"/>
    </location>
</feature>
<feature type="strand" evidence="12">
    <location>
        <begin position="549"/>
        <end position="553"/>
    </location>
</feature>
<feature type="strand" evidence="12">
    <location>
        <begin position="556"/>
        <end position="559"/>
    </location>
</feature>
<feature type="helix" evidence="12">
    <location>
        <begin position="561"/>
        <end position="573"/>
    </location>
</feature>
<feature type="helix" evidence="12">
    <location>
        <begin position="575"/>
        <end position="578"/>
    </location>
</feature>
<feature type="helix" evidence="12">
    <location>
        <begin position="580"/>
        <end position="594"/>
    </location>
</feature>
<feature type="strand" evidence="9">
    <location>
        <begin position="596"/>
        <end position="598"/>
    </location>
</feature>
<feature type="helix" evidence="12">
    <location>
        <begin position="600"/>
        <end position="609"/>
    </location>
</feature>
<feature type="strand" evidence="11">
    <location>
        <begin position="612"/>
        <end position="615"/>
    </location>
</feature>
<feature type="helix" evidence="12">
    <location>
        <begin position="619"/>
        <end position="622"/>
    </location>
</feature>
<feature type="helix" evidence="12">
    <location>
        <begin position="625"/>
        <end position="629"/>
    </location>
</feature>
<feature type="helix" evidence="12">
    <location>
        <begin position="633"/>
        <end position="635"/>
    </location>
</feature>
<feature type="helix" evidence="12">
    <location>
        <begin position="638"/>
        <end position="641"/>
    </location>
</feature>
<feature type="strand" evidence="12">
    <location>
        <begin position="643"/>
        <end position="648"/>
    </location>
</feature>
<feature type="strand" evidence="12">
    <location>
        <begin position="654"/>
        <end position="660"/>
    </location>
</feature>
<feature type="strand" evidence="12">
    <location>
        <begin position="663"/>
        <end position="671"/>
    </location>
</feature>
<feature type="strand" evidence="12">
    <location>
        <begin position="673"/>
        <end position="683"/>
    </location>
</feature>
<feature type="helix" evidence="12">
    <location>
        <begin position="690"/>
        <end position="692"/>
    </location>
</feature>
<feature type="helix" evidence="12">
    <location>
        <begin position="695"/>
        <end position="703"/>
    </location>
</feature>
<comment type="function">
    <text evidence="2 5 6">Releases the supercoiling and torsional tension of DNA, which is introduced during the DNA replication and transcription, by transiently cleaving and rejoining one strand of the DNA duplex (PubMed:20724443, PubMed:8921893). Introduces a single-strand break via transesterification at a target site in duplex DNA. The scissile phosphodiester is attacked by the catalytic tyrosine of the enzyme, resulting in the formation of a DNA-(5'-phosphotyrosyl)-enzyme intermediate and the expulsion of a 3'-OH DNA strand. The free DNA strand then undergoes passage around the unbroken strand, thus removing DNA supercoils. Finally, in the religation step, the DNA 3'-OH attacks the covalent intermediate to expel the active-site tyrosine and restore the DNA phosphodiester backbone.</text>
</comment>
<comment type="function">
    <text evidence="5">The C-terminus (residues 622-934) inhibits RNA cleavage by MazF4.</text>
</comment>
<comment type="catalytic activity">
    <reaction evidence="2 6">
        <text>ATP-independent breakage of single-stranded DNA, followed by passage and rejoining.</text>
        <dbReference type="EC" id="5.6.2.1"/>
    </reaction>
</comment>
<comment type="cofactor">
    <cofactor evidence="2">
        <name>Mg(2+)</name>
        <dbReference type="ChEBI" id="CHEBI:18420"/>
    </cofactor>
</comment>
<comment type="activity regulation">
    <text evidence="1 5">ssDNA cleavage is inhibited by MazF4 (PubMed:20724443). Relaxation of supercoiling is stimulated by DNA-binding protein HupB (By similarity).</text>
</comment>
<comment type="subunit">
    <text evidence="1 2 5">Monomer (By similarity). Interacts with mRNA interferase MazF4 (PubMed:20724443). Interacts with DNA-binding protein HupB (By similarity).</text>
</comment>
<comment type="miscellaneous">
    <text>Was identified as a high-confidence drug target.</text>
</comment>
<comment type="similarity">
    <text evidence="2">Belongs to the type IA topoisomerase family.</text>
</comment>
<gene>
    <name evidence="2" type="primary">topA</name>
    <name type="ordered locus">Rv3646c</name>
    <name type="ORF">MTCY15C10.06</name>
</gene>
<keyword id="KW-0002">3D-structure</keyword>
<keyword id="KW-0238">DNA-binding</keyword>
<keyword id="KW-0413">Isomerase</keyword>
<keyword id="KW-0460">Magnesium</keyword>
<keyword id="KW-0479">Metal-binding</keyword>
<keyword id="KW-1185">Reference proteome</keyword>
<keyword id="KW-0799">Topoisomerase</keyword>
<organism>
    <name type="scientific">Mycobacterium tuberculosis (strain ATCC 25618 / H37Rv)</name>
    <dbReference type="NCBI Taxonomy" id="83332"/>
    <lineage>
        <taxon>Bacteria</taxon>
        <taxon>Bacillati</taxon>
        <taxon>Actinomycetota</taxon>
        <taxon>Actinomycetes</taxon>
        <taxon>Mycobacteriales</taxon>
        <taxon>Mycobacteriaceae</taxon>
        <taxon>Mycobacterium</taxon>
        <taxon>Mycobacterium tuberculosis complex</taxon>
    </lineage>
</organism>
<accession>P9WG49</accession>
<accession>L0TDE3</accession>
<accession>O08383</accession>
<accession>P0A620</accession>
<accession>Q59567</accession>
<sequence>MADPKTKGRGSGGNGSGRRLVIVESPTKARKLASYLGSGYIVESSRGHIRDLPRAASDVPAKYKSQPWARLGVNVDADFEPLYIISPEKRSTVSELRGLLKDVDELYLATDGDREGEAIAWHLLETLKPRIPVKRMVFHEITEPAIRAAAEHPRDLDIDLVDAQETRRILDRLYGYEVSPVLWKKVAPKLSAGRVQSVATRIIVARERDRMAFRSAAYWDILAKLDASVSDPDAAPPTFSARLTAVAGRRVATGRDFDSLGTLRKGDEVIVLDEGSATALAAGLDGTQLTVASAEEKPYARRPYPPFMTSTLQQEASRKLRFSAERTMSIAQRLYENGYITYMRTDSTTLSESAINAARTQARQLYGDEYVAPAPRQYTRKVKNAQEAHEAIRPAGETFATPDAVRRELDGPNIDDFRLYELIWQRTVASQMADARGMTLSLRITGMSGHQEVVFSATGRTLTFPGFLKAYVETVDELVGGEADDAERRLPHLTPGQRLDIVELTPDGHATNPPARYTEASLVKALEELGIGRPSTYSSIIKTIQDRGYVHKKGSALVPSWVAFAVTGLLEQHFGRLVDYDFTAAMEDELDEIAAGNERRTNWLNNFYFGGDHGVPDSVARSGGLKKLVGINLEGIDAREVNSIKLFDDTHGRPIYVRVGKNGPYLERLVAGDTGEPTPQRANLSDSITPDELTLQVAEELFATPQQGRTLGLDPETGHEIVAREGRFGPYVTEILPEPAADAAAAAQGVKKRQKAAGPKPRTGSLLRSMDLQTVTLEDALRLLSLPRVVGVDPASGEEITAQNGRYGPYLKRGNDSRSLVTEDQIFTITLDEALKIYAEPKRRGRQSASAPPLRELGTDPASGKPMVIKDGRFGPYVTDGETNASLRKGDDVASITDERAAELLADRRARGPAKRPARKAARKVPAKKAAKRD</sequence>